<reference key="1">
    <citation type="submission" date="2004-12" db="EMBL/GenBank/DDBJ databases">
        <authorList>
            <person name="Dong H.T."/>
            <person name="Peng Y.L."/>
            <person name="Chen B.S."/>
            <person name="Li Y.Z."/>
            <person name="Li D.B."/>
        </authorList>
    </citation>
    <scope>NUCLEOTIDE SEQUENCE [MRNA]</scope>
    <source>
        <strain>Y34</strain>
        <tissue>Conidium</tissue>
    </source>
</reference>
<reference key="2">
    <citation type="journal article" date="2012" name="PLoS Genet.">
        <title>Comparative analysis of the genomes of two field isolates of the rice blast fungus Magnaporthe oryzae.</title>
        <authorList>
            <person name="Xue M."/>
            <person name="Yang J."/>
            <person name="Li Z."/>
            <person name="Hu S."/>
            <person name="Yao N."/>
            <person name="Dean R.A."/>
            <person name="Zhao W."/>
            <person name="Shen M."/>
            <person name="Zhang H."/>
            <person name="Li C."/>
            <person name="Liu L."/>
            <person name="Cao L."/>
            <person name="Xu X."/>
            <person name="Xing Y."/>
            <person name="Hsiang T."/>
            <person name="Zhang Z."/>
            <person name="Xu J.-R."/>
            <person name="Peng Y.-L."/>
        </authorList>
    </citation>
    <scope>NUCLEOTIDE SEQUENCE [LARGE SCALE GENOMIC DNA]</scope>
    <source>
        <strain>Y34</strain>
    </source>
</reference>
<feature type="chain" id="PRO_0000423541" description="Eukaryotic translation initiation factor 3 subunit L">
    <location>
        <begin position="1"/>
        <end position="471"/>
    </location>
</feature>
<feature type="domain" description="PCI" evidence="2">
    <location>
        <begin position="252"/>
        <end position="446"/>
    </location>
</feature>
<dbReference type="EMBL" id="AY849624">
    <property type="protein sequence ID" value="AAX07645.1"/>
    <property type="molecule type" value="mRNA"/>
</dbReference>
<dbReference type="EMBL" id="JH793345">
    <property type="protein sequence ID" value="ELQ35366.1"/>
    <property type="molecule type" value="Genomic_DNA"/>
</dbReference>
<dbReference type="SMR" id="L7HXG6"/>
<dbReference type="OrthoDB" id="635785at147550"/>
<dbReference type="Proteomes" id="UP000011086">
    <property type="component" value="Unassembled WGS sequence"/>
</dbReference>
<dbReference type="GO" id="GO:0016282">
    <property type="term" value="C:eukaryotic 43S preinitiation complex"/>
    <property type="evidence" value="ECO:0007669"/>
    <property type="project" value="UniProtKB-UniRule"/>
</dbReference>
<dbReference type="GO" id="GO:0033290">
    <property type="term" value="C:eukaryotic 48S preinitiation complex"/>
    <property type="evidence" value="ECO:0007669"/>
    <property type="project" value="UniProtKB-UniRule"/>
</dbReference>
<dbReference type="GO" id="GO:0005852">
    <property type="term" value="C:eukaryotic translation initiation factor 3 complex"/>
    <property type="evidence" value="ECO:0007669"/>
    <property type="project" value="UniProtKB-UniRule"/>
</dbReference>
<dbReference type="GO" id="GO:0003743">
    <property type="term" value="F:translation initiation factor activity"/>
    <property type="evidence" value="ECO:0007669"/>
    <property type="project" value="UniProtKB-UniRule"/>
</dbReference>
<dbReference type="GO" id="GO:0001732">
    <property type="term" value="P:formation of cytoplasmic translation initiation complex"/>
    <property type="evidence" value="ECO:0007669"/>
    <property type="project" value="UniProtKB-UniRule"/>
</dbReference>
<dbReference type="HAMAP" id="MF_03011">
    <property type="entry name" value="eIF3l"/>
    <property type="match status" value="1"/>
</dbReference>
<dbReference type="InterPro" id="IPR019382">
    <property type="entry name" value="eIF3l"/>
</dbReference>
<dbReference type="InterPro" id="IPR000717">
    <property type="entry name" value="PCI_dom"/>
</dbReference>
<dbReference type="PANTHER" id="PTHR13242">
    <property type="entry name" value="EUKARYOTIC TRANSLATION INITIATION FACTOR 3"/>
    <property type="match status" value="1"/>
</dbReference>
<dbReference type="PANTHER" id="PTHR13242:SF0">
    <property type="entry name" value="EUKARYOTIC TRANSLATION INITIATION FACTOR 3 SUBUNIT L"/>
    <property type="match status" value="1"/>
</dbReference>
<dbReference type="Pfam" id="PF10255">
    <property type="entry name" value="Paf67"/>
    <property type="match status" value="1"/>
</dbReference>
<dbReference type="PROSITE" id="PS50250">
    <property type="entry name" value="PCI"/>
    <property type="match status" value="1"/>
</dbReference>
<accession>L7HXG6</accession>
<accession>G4N5M7</accession>
<accession>Q5EN08</accession>
<keyword id="KW-0963">Cytoplasm</keyword>
<keyword id="KW-0396">Initiation factor</keyword>
<keyword id="KW-0648">Protein biosynthesis</keyword>
<evidence type="ECO:0000255" key="1">
    <source>
        <dbReference type="HAMAP-Rule" id="MF_03011"/>
    </source>
</evidence>
<evidence type="ECO:0000255" key="2">
    <source>
        <dbReference type="PROSITE-ProRule" id="PRU01185"/>
    </source>
</evidence>
<sequence>MSGYQNGGPRGLADDSDVEEEALVADYREQVQYEEGMDDPDMGLAQQTDDIQSRLVAAAQPLDFSAPLEVKFQSYDQYCSLFHFILNSDGPVDLEPPSYYWAWDVIDEFIYQFNSFSSYRMRIARQANNEEEAQILRENPNTWGCYSVLNVLYSLIQRSQILEQLQAMKRNEDPMAVAGDYGSRSLYRMLGYFSIIGLLRVHCLLGDFSLALRTLDDIELNKKAMFARVMAAHFTTYYYVGFSYMMVRRYADAIRMFSHILVYVSRTKNFQKNAQYDSITKKNDQMLALIAICVAFHPTRLDDTIHTALREKFGDQLLKLQRGGPESLPVYEELFRTACPKFISPVPPDFDNPEANVDPIEHHLSVFMDEVKTNMWSPTVKSYLRLYTTMDLKKLAGFLSVKPEELRSWLLVNKQRTKQLRWADHGLLDGELVNVSDLDYAMQGDLIHISEAKVGRKLVDWYLRNLSRTYV</sequence>
<organism>
    <name type="scientific">Pyricularia oryzae (strain Y34)</name>
    <name type="common">Rice blast fungus</name>
    <name type="synonym">Magnaporthe oryzae</name>
    <dbReference type="NCBI Taxonomy" id="1143189"/>
    <lineage>
        <taxon>Eukaryota</taxon>
        <taxon>Fungi</taxon>
        <taxon>Dikarya</taxon>
        <taxon>Ascomycota</taxon>
        <taxon>Pezizomycotina</taxon>
        <taxon>Sordariomycetes</taxon>
        <taxon>Sordariomycetidae</taxon>
        <taxon>Magnaporthales</taxon>
        <taxon>Pyriculariaceae</taxon>
        <taxon>Pyricularia</taxon>
    </lineage>
</organism>
<comment type="function">
    <text evidence="1">Component of the eukaryotic translation initiation factor 3 (eIF-3) complex, which is involved in protein synthesis of a specialized repertoire of mRNAs and, together with other initiation factors, stimulates binding of mRNA and methionyl-tRNAi to the 40S ribosome. The eIF-3 complex specifically targets and initiates translation of a subset of mRNAs involved in cell proliferation.</text>
</comment>
<comment type="subcellular location">
    <subcellularLocation>
        <location evidence="1">Cytoplasm</location>
    </subcellularLocation>
</comment>
<comment type="similarity">
    <text evidence="1">Belongs to the eIF-3 subunit L family.</text>
</comment>
<name>EIF3L_PYRO3</name>
<protein>
    <recommendedName>
        <fullName evidence="1">Eukaryotic translation initiation factor 3 subunit L</fullName>
        <shortName evidence="1">eIF3l</shortName>
    </recommendedName>
</protein>
<proteinExistence type="evidence at transcript level"/>
<gene>
    <name type="ORF">OOU_Y34scaffold00711g6</name>
</gene>